<accession>Q3ZYG0</accession>
<gene>
    <name evidence="1" type="primary">argG</name>
    <name type="ordered locus">cbdbA1183</name>
</gene>
<feature type="chain" id="PRO_0000263919" description="Argininosuccinate synthase">
    <location>
        <begin position="1"/>
        <end position="406"/>
    </location>
</feature>
<feature type="binding site" evidence="1">
    <location>
        <begin position="8"/>
        <end position="16"/>
    </location>
    <ligand>
        <name>ATP</name>
        <dbReference type="ChEBI" id="CHEBI:30616"/>
    </ligand>
</feature>
<feature type="binding site" evidence="1">
    <location>
        <position position="86"/>
    </location>
    <ligand>
        <name>L-citrulline</name>
        <dbReference type="ChEBI" id="CHEBI:57743"/>
    </ligand>
</feature>
<feature type="binding site" evidence="1">
    <location>
        <position position="116"/>
    </location>
    <ligand>
        <name>ATP</name>
        <dbReference type="ChEBI" id="CHEBI:30616"/>
    </ligand>
</feature>
<feature type="binding site" evidence="1">
    <location>
        <position position="118"/>
    </location>
    <ligand>
        <name>L-aspartate</name>
        <dbReference type="ChEBI" id="CHEBI:29991"/>
    </ligand>
</feature>
<feature type="binding site" evidence="1">
    <location>
        <position position="122"/>
    </location>
    <ligand>
        <name>L-aspartate</name>
        <dbReference type="ChEBI" id="CHEBI:29991"/>
    </ligand>
</feature>
<feature type="binding site" evidence="1">
    <location>
        <position position="122"/>
    </location>
    <ligand>
        <name>L-citrulline</name>
        <dbReference type="ChEBI" id="CHEBI:57743"/>
    </ligand>
</feature>
<feature type="binding site" evidence="1">
    <location>
        <position position="123"/>
    </location>
    <ligand>
        <name>L-aspartate</name>
        <dbReference type="ChEBI" id="CHEBI:29991"/>
    </ligand>
</feature>
<feature type="binding site" evidence="1">
    <location>
        <position position="126"/>
    </location>
    <ligand>
        <name>L-citrulline</name>
        <dbReference type="ChEBI" id="CHEBI:57743"/>
    </ligand>
</feature>
<feature type="binding site" evidence="1">
    <location>
        <position position="174"/>
    </location>
    <ligand>
        <name>L-citrulline</name>
        <dbReference type="ChEBI" id="CHEBI:57743"/>
    </ligand>
</feature>
<feature type="binding site" evidence="1">
    <location>
        <position position="183"/>
    </location>
    <ligand>
        <name>L-citrulline</name>
        <dbReference type="ChEBI" id="CHEBI:57743"/>
    </ligand>
</feature>
<feature type="binding site" evidence="1">
    <location>
        <position position="259"/>
    </location>
    <ligand>
        <name>L-citrulline</name>
        <dbReference type="ChEBI" id="CHEBI:57743"/>
    </ligand>
</feature>
<feature type="binding site" evidence="1">
    <location>
        <position position="271"/>
    </location>
    <ligand>
        <name>L-citrulline</name>
        <dbReference type="ChEBI" id="CHEBI:57743"/>
    </ligand>
</feature>
<keyword id="KW-0028">Amino-acid biosynthesis</keyword>
<keyword id="KW-0055">Arginine biosynthesis</keyword>
<keyword id="KW-0067">ATP-binding</keyword>
<keyword id="KW-0963">Cytoplasm</keyword>
<keyword id="KW-0436">Ligase</keyword>
<keyword id="KW-0547">Nucleotide-binding</keyword>
<sequence length="406" mass="45158">MSEKVVLAYSGGLDTSAAVKWLQEKYGMDVIAVTIDVGNEKDFTLIKEKALKVGAKKAYVRDVRKEFAEDYIWKAIKANSMYEGVYPLATALARPLIAKVMVDIALEEGATAIAHGCTGKGNDQVRFDVGINTLAPHLKIIAPARQWGMTREQTMEYAQKWGIPVPISVKNPFSIDENLWGRSIECGLLEDPWNEPIPEVFAWTRPVEETPDEPEYLEVEFEQGVPVAVNGEKLSPLALIQKVHDIASLHGVGRIDHVENRLVGIKSREIYEAPAAVVLIAAHQALEAMTLSKSQLRFKQMVEATYSDIIYNGLWFSALRQDLDAFIDSSQRFVSGTVRLKLSKGSFRVVGRKSPYSLYHKGMATYDKGDQFDPSSAVGFITLWGLQAKLQAQLQPILEEEKGNKS</sequence>
<organism>
    <name type="scientific">Dehalococcoides mccartyi (strain CBDB1)</name>
    <dbReference type="NCBI Taxonomy" id="255470"/>
    <lineage>
        <taxon>Bacteria</taxon>
        <taxon>Bacillati</taxon>
        <taxon>Chloroflexota</taxon>
        <taxon>Dehalococcoidia</taxon>
        <taxon>Dehalococcoidales</taxon>
        <taxon>Dehalococcoidaceae</taxon>
        <taxon>Dehalococcoides</taxon>
    </lineage>
</organism>
<proteinExistence type="inferred from homology"/>
<comment type="catalytic activity">
    <reaction evidence="1">
        <text>L-citrulline + L-aspartate + ATP = 2-(N(omega)-L-arginino)succinate + AMP + diphosphate + H(+)</text>
        <dbReference type="Rhea" id="RHEA:10932"/>
        <dbReference type="ChEBI" id="CHEBI:15378"/>
        <dbReference type="ChEBI" id="CHEBI:29991"/>
        <dbReference type="ChEBI" id="CHEBI:30616"/>
        <dbReference type="ChEBI" id="CHEBI:33019"/>
        <dbReference type="ChEBI" id="CHEBI:57472"/>
        <dbReference type="ChEBI" id="CHEBI:57743"/>
        <dbReference type="ChEBI" id="CHEBI:456215"/>
        <dbReference type="EC" id="6.3.4.5"/>
    </reaction>
</comment>
<comment type="pathway">
    <text evidence="1">Amino-acid biosynthesis; L-arginine biosynthesis; L-arginine from L-ornithine and carbamoyl phosphate: step 2/3.</text>
</comment>
<comment type="subunit">
    <text evidence="1">Homotetramer.</text>
</comment>
<comment type="subcellular location">
    <subcellularLocation>
        <location evidence="1">Cytoplasm</location>
    </subcellularLocation>
</comment>
<comment type="similarity">
    <text evidence="1">Belongs to the argininosuccinate synthase family. Type 1 subfamily.</text>
</comment>
<dbReference type="EC" id="6.3.4.5" evidence="1"/>
<dbReference type="EMBL" id="AJ965256">
    <property type="protein sequence ID" value="CAI83267.1"/>
    <property type="molecule type" value="Genomic_DNA"/>
</dbReference>
<dbReference type="RefSeq" id="WP_011309618.1">
    <property type="nucleotide sequence ID" value="NC_007356.1"/>
</dbReference>
<dbReference type="SMR" id="Q3ZYG0"/>
<dbReference type="KEGG" id="deh:cbdbA1183"/>
<dbReference type="HOGENOM" id="CLU_032784_4_2_0"/>
<dbReference type="UniPathway" id="UPA00068">
    <property type="reaction ID" value="UER00113"/>
</dbReference>
<dbReference type="Proteomes" id="UP000000433">
    <property type="component" value="Chromosome"/>
</dbReference>
<dbReference type="GO" id="GO:0005737">
    <property type="term" value="C:cytoplasm"/>
    <property type="evidence" value="ECO:0007669"/>
    <property type="project" value="UniProtKB-SubCell"/>
</dbReference>
<dbReference type="GO" id="GO:0004055">
    <property type="term" value="F:argininosuccinate synthase activity"/>
    <property type="evidence" value="ECO:0007669"/>
    <property type="project" value="UniProtKB-UniRule"/>
</dbReference>
<dbReference type="GO" id="GO:0005524">
    <property type="term" value="F:ATP binding"/>
    <property type="evidence" value="ECO:0007669"/>
    <property type="project" value="UniProtKB-UniRule"/>
</dbReference>
<dbReference type="GO" id="GO:0000053">
    <property type="term" value="P:argininosuccinate metabolic process"/>
    <property type="evidence" value="ECO:0007669"/>
    <property type="project" value="TreeGrafter"/>
</dbReference>
<dbReference type="GO" id="GO:0006526">
    <property type="term" value="P:L-arginine biosynthetic process"/>
    <property type="evidence" value="ECO:0007669"/>
    <property type="project" value="UniProtKB-UniRule"/>
</dbReference>
<dbReference type="GO" id="GO:0000050">
    <property type="term" value="P:urea cycle"/>
    <property type="evidence" value="ECO:0007669"/>
    <property type="project" value="TreeGrafter"/>
</dbReference>
<dbReference type="CDD" id="cd01999">
    <property type="entry name" value="ASS"/>
    <property type="match status" value="1"/>
</dbReference>
<dbReference type="FunFam" id="3.40.50.620:FF:000019">
    <property type="entry name" value="Argininosuccinate synthase"/>
    <property type="match status" value="1"/>
</dbReference>
<dbReference type="FunFam" id="3.90.1260.10:FF:000007">
    <property type="entry name" value="Argininosuccinate synthase"/>
    <property type="match status" value="1"/>
</dbReference>
<dbReference type="Gene3D" id="3.90.1260.10">
    <property type="entry name" value="Argininosuccinate synthetase, chain A, domain 2"/>
    <property type="match status" value="1"/>
</dbReference>
<dbReference type="Gene3D" id="3.40.50.620">
    <property type="entry name" value="HUPs"/>
    <property type="match status" value="1"/>
</dbReference>
<dbReference type="Gene3D" id="1.20.5.470">
    <property type="entry name" value="Single helix bin"/>
    <property type="match status" value="1"/>
</dbReference>
<dbReference type="HAMAP" id="MF_00005">
    <property type="entry name" value="Arg_succ_synth_type1"/>
    <property type="match status" value="1"/>
</dbReference>
<dbReference type="InterPro" id="IPR048268">
    <property type="entry name" value="Arginosuc_syn_C"/>
</dbReference>
<dbReference type="InterPro" id="IPR048267">
    <property type="entry name" value="Arginosuc_syn_N"/>
</dbReference>
<dbReference type="InterPro" id="IPR001518">
    <property type="entry name" value="Arginosuc_synth"/>
</dbReference>
<dbReference type="InterPro" id="IPR018223">
    <property type="entry name" value="Arginosuc_synth_CS"/>
</dbReference>
<dbReference type="InterPro" id="IPR023434">
    <property type="entry name" value="Arginosuc_synth_type_1_subfam"/>
</dbReference>
<dbReference type="InterPro" id="IPR024074">
    <property type="entry name" value="AS_cat/multimer_dom_body"/>
</dbReference>
<dbReference type="InterPro" id="IPR014729">
    <property type="entry name" value="Rossmann-like_a/b/a_fold"/>
</dbReference>
<dbReference type="NCBIfam" id="TIGR00032">
    <property type="entry name" value="argG"/>
    <property type="match status" value="1"/>
</dbReference>
<dbReference type="NCBIfam" id="NF001770">
    <property type="entry name" value="PRK00509.1"/>
    <property type="match status" value="1"/>
</dbReference>
<dbReference type="PANTHER" id="PTHR11587">
    <property type="entry name" value="ARGININOSUCCINATE SYNTHASE"/>
    <property type="match status" value="1"/>
</dbReference>
<dbReference type="PANTHER" id="PTHR11587:SF2">
    <property type="entry name" value="ARGININOSUCCINATE SYNTHASE"/>
    <property type="match status" value="1"/>
</dbReference>
<dbReference type="Pfam" id="PF20979">
    <property type="entry name" value="Arginosuc_syn_C"/>
    <property type="match status" value="1"/>
</dbReference>
<dbReference type="Pfam" id="PF00764">
    <property type="entry name" value="Arginosuc_synth"/>
    <property type="match status" value="1"/>
</dbReference>
<dbReference type="SUPFAM" id="SSF52402">
    <property type="entry name" value="Adenine nucleotide alpha hydrolases-like"/>
    <property type="match status" value="1"/>
</dbReference>
<dbReference type="SUPFAM" id="SSF69864">
    <property type="entry name" value="Argininosuccinate synthetase, C-terminal domain"/>
    <property type="match status" value="1"/>
</dbReference>
<dbReference type="PROSITE" id="PS00564">
    <property type="entry name" value="ARGININOSUCCIN_SYN_1"/>
    <property type="match status" value="1"/>
</dbReference>
<dbReference type="PROSITE" id="PS00565">
    <property type="entry name" value="ARGININOSUCCIN_SYN_2"/>
    <property type="match status" value="1"/>
</dbReference>
<reference key="1">
    <citation type="journal article" date="2005" name="Nat. Biotechnol.">
        <title>Genome sequence of the chlorinated compound-respiring bacterium Dehalococcoides species strain CBDB1.</title>
        <authorList>
            <person name="Kube M."/>
            <person name="Beck A."/>
            <person name="Zinder S.H."/>
            <person name="Kuhl H."/>
            <person name="Reinhardt R."/>
            <person name="Adrian L."/>
        </authorList>
    </citation>
    <scope>NUCLEOTIDE SEQUENCE [LARGE SCALE GENOMIC DNA]</scope>
    <source>
        <strain>CBDB1</strain>
    </source>
</reference>
<protein>
    <recommendedName>
        <fullName evidence="1">Argininosuccinate synthase</fullName>
        <ecNumber evidence="1">6.3.4.5</ecNumber>
    </recommendedName>
    <alternativeName>
        <fullName evidence="1">Citrulline--aspartate ligase</fullName>
    </alternativeName>
</protein>
<name>ASSY_DEHMC</name>
<evidence type="ECO:0000255" key="1">
    <source>
        <dbReference type="HAMAP-Rule" id="MF_00005"/>
    </source>
</evidence>